<proteinExistence type="inferred from homology"/>
<sequence>MSKNPGRILIFDTTLRDGEQSPGASLNLEEKLAIAHQLARLGVDVIEAGFPFASPGDFKAVNKIASAVGKEHGPTICGLARASKGDIKACYEAVSPAPKKRIHTFIATSDIHLKHKLKKSRKDVLQIVPEMVNYAKSLVDDIEFSCEDASRSDPDFLYEVIQLAISAGATTINIPDTVGFTTPSEFGNLIADINKNVPNIDEAVISVHGHNDLGLAVANFLEAVKNGARQLECTINGIGERAGNASLEELVMALHVRKSFFNSFFKRNPDSPTPLTAIRTEEITKTSRLVSNLTGMTVQPNKAIVGANAFAHESGIHQDGVLKNRLTYEIIDAKTVGLSDNKISLGKLSGRSAVRARLEEMGYDLSREDLNDAFARFKDLADRKREITDRDLEAIVSEQVQLPEAKFQLSLVQVSCGNASKPTATISLLNTEDNTEDTAVSIGTGPVDAVCEALNKLAKVPNELIEFSVKSVTEGIDALGEVTIRIRRDNKIYSGHSADTDVVVAAANAYINALNRLVFSEKKNSIHPQFDNLENSNNTYISNPAN</sequence>
<feature type="chain" id="PRO_1000149240" description="2-isopropylmalate synthase">
    <location>
        <begin position="1"/>
        <end position="546"/>
    </location>
</feature>
<feature type="domain" description="Pyruvate carboxyltransferase" evidence="1">
    <location>
        <begin position="8"/>
        <end position="271"/>
    </location>
</feature>
<feature type="region of interest" description="Regulatory domain" evidence="1">
    <location>
        <begin position="408"/>
        <end position="546"/>
    </location>
</feature>
<feature type="binding site" evidence="1">
    <location>
        <position position="17"/>
    </location>
    <ligand>
        <name>Mn(2+)</name>
        <dbReference type="ChEBI" id="CHEBI:29035"/>
    </ligand>
</feature>
<feature type="binding site" evidence="1">
    <location>
        <position position="208"/>
    </location>
    <ligand>
        <name>Mn(2+)</name>
        <dbReference type="ChEBI" id="CHEBI:29035"/>
    </ligand>
</feature>
<feature type="binding site" evidence="1">
    <location>
        <position position="210"/>
    </location>
    <ligand>
        <name>Mn(2+)</name>
        <dbReference type="ChEBI" id="CHEBI:29035"/>
    </ligand>
</feature>
<feature type="binding site" evidence="1">
    <location>
        <position position="244"/>
    </location>
    <ligand>
        <name>Mn(2+)</name>
        <dbReference type="ChEBI" id="CHEBI:29035"/>
    </ligand>
</feature>
<dbReference type="EC" id="2.3.3.13" evidence="1"/>
<dbReference type="EMBL" id="CP000576">
    <property type="protein sequence ID" value="ABO17795.1"/>
    <property type="molecule type" value="Genomic_DNA"/>
</dbReference>
<dbReference type="RefSeq" id="WP_011863123.1">
    <property type="nucleotide sequence ID" value="NC_009091.1"/>
</dbReference>
<dbReference type="SMR" id="A3PDH0"/>
<dbReference type="STRING" id="167546.P9301_11721"/>
<dbReference type="KEGG" id="pmg:P9301_11721"/>
<dbReference type="eggNOG" id="COG0119">
    <property type="taxonomic scope" value="Bacteria"/>
</dbReference>
<dbReference type="HOGENOM" id="CLU_022158_0_1_3"/>
<dbReference type="OrthoDB" id="9804858at2"/>
<dbReference type="UniPathway" id="UPA00048">
    <property type="reaction ID" value="UER00070"/>
</dbReference>
<dbReference type="Proteomes" id="UP000001430">
    <property type="component" value="Chromosome"/>
</dbReference>
<dbReference type="GO" id="GO:0005737">
    <property type="term" value="C:cytoplasm"/>
    <property type="evidence" value="ECO:0007669"/>
    <property type="project" value="UniProtKB-SubCell"/>
</dbReference>
<dbReference type="GO" id="GO:0003852">
    <property type="term" value="F:2-isopropylmalate synthase activity"/>
    <property type="evidence" value="ECO:0007669"/>
    <property type="project" value="UniProtKB-UniRule"/>
</dbReference>
<dbReference type="GO" id="GO:0003985">
    <property type="term" value="F:acetyl-CoA C-acetyltransferase activity"/>
    <property type="evidence" value="ECO:0007669"/>
    <property type="project" value="UniProtKB-UniRule"/>
</dbReference>
<dbReference type="GO" id="GO:0030145">
    <property type="term" value="F:manganese ion binding"/>
    <property type="evidence" value="ECO:0007669"/>
    <property type="project" value="UniProtKB-UniRule"/>
</dbReference>
<dbReference type="GO" id="GO:0009098">
    <property type="term" value="P:L-leucine biosynthetic process"/>
    <property type="evidence" value="ECO:0007669"/>
    <property type="project" value="UniProtKB-UniRule"/>
</dbReference>
<dbReference type="CDD" id="cd07940">
    <property type="entry name" value="DRE_TIM_IPMS"/>
    <property type="match status" value="1"/>
</dbReference>
<dbReference type="FunFam" id="1.10.238.260:FF:000001">
    <property type="entry name" value="2-isopropylmalate synthase"/>
    <property type="match status" value="1"/>
</dbReference>
<dbReference type="FunFam" id="3.20.20.70:FF:000010">
    <property type="entry name" value="2-isopropylmalate synthase"/>
    <property type="match status" value="1"/>
</dbReference>
<dbReference type="Gene3D" id="1.10.238.260">
    <property type="match status" value="1"/>
</dbReference>
<dbReference type="Gene3D" id="3.30.160.270">
    <property type="match status" value="1"/>
</dbReference>
<dbReference type="Gene3D" id="3.20.20.70">
    <property type="entry name" value="Aldolase class I"/>
    <property type="match status" value="1"/>
</dbReference>
<dbReference type="HAMAP" id="MF_01025">
    <property type="entry name" value="LeuA_type1"/>
    <property type="match status" value="1"/>
</dbReference>
<dbReference type="InterPro" id="IPR050073">
    <property type="entry name" value="2-IPM_HCS-like"/>
</dbReference>
<dbReference type="InterPro" id="IPR013709">
    <property type="entry name" value="2-isopropylmalate_synth_dimer"/>
</dbReference>
<dbReference type="InterPro" id="IPR002034">
    <property type="entry name" value="AIPM/Hcit_synth_CS"/>
</dbReference>
<dbReference type="InterPro" id="IPR013785">
    <property type="entry name" value="Aldolase_TIM"/>
</dbReference>
<dbReference type="InterPro" id="IPR054691">
    <property type="entry name" value="LeuA/HCS_post-cat"/>
</dbReference>
<dbReference type="InterPro" id="IPR036230">
    <property type="entry name" value="LeuA_allosteric_dom_sf"/>
</dbReference>
<dbReference type="InterPro" id="IPR005671">
    <property type="entry name" value="LeuA_bact_synth"/>
</dbReference>
<dbReference type="InterPro" id="IPR000891">
    <property type="entry name" value="PYR_CT"/>
</dbReference>
<dbReference type="NCBIfam" id="TIGR00973">
    <property type="entry name" value="leuA_bact"/>
    <property type="match status" value="1"/>
</dbReference>
<dbReference type="NCBIfam" id="NF002086">
    <property type="entry name" value="PRK00915.1-3"/>
    <property type="match status" value="1"/>
</dbReference>
<dbReference type="PANTHER" id="PTHR10277:SF9">
    <property type="entry name" value="2-ISOPROPYLMALATE SYNTHASE 1, CHLOROPLASTIC-RELATED"/>
    <property type="match status" value="1"/>
</dbReference>
<dbReference type="PANTHER" id="PTHR10277">
    <property type="entry name" value="HOMOCITRATE SYNTHASE-RELATED"/>
    <property type="match status" value="1"/>
</dbReference>
<dbReference type="Pfam" id="PF22617">
    <property type="entry name" value="HCS_D2"/>
    <property type="match status" value="1"/>
</dbReference>
<dbReference type="Pfam" id="PF00682">
    <property type="entry name" value="HMGL-like"/>
    <property type="match status" value="1"/>
</dbReference>
<dbReference type="Pfam" id="PF08502">
    <property type="entry name" value="LeuA_dimer"/>
    <property type="match status" value="1"/>
</dbReference>
<dbReference type="SMART" id="SM00917">
    <property type="entry name" value="LeuA_dimer"/>
    <property type="match status" value="1"/>
</dbReference>
<dbReference type="SUPFAM" id="SSF110921">
    <property type="entry name" value="2-isopropylmalate synthase LeuA, allosteric (dimerisation) domain"/>
    <property type="match status" value="1"/>
</dbReference>
<dbReference type="SUPFAM" id="SSF51569">
    <property type="entry name" value="Aldolase"/>
    <property type="match status" value="1"/>
</dbReference>
<dbReference type="PROSITE" id="PS00815">
    <property type="entry name" value="AIPM_HOMOCIT_SYNTH_1"/>
    <property type="match status" value="1"/>
</dbReference>
<dbReference type="PROSITE" id="PS00816">
    <property type="entry name" value="AIPM_HOMOCIT_SYNTH_2"/>
    <property type="match status" value="1"/>
</dbReference>
<dbReference type="PROSITE" id="PS50991">
    <property type="entry name" value="PYR_CT"/>
    <property type="match status" value="1"/>
</dbReference>
<comment type="function">
    <text evidence="1">Catalyzes the condensation of the acetyl group of acetyl-CoA with 3-methyl-2-oxobutanoate (2-ketoisovalerate) to form 3-carboxy-3-hydroxy-4-methylpentanoate (2-isopropylmalate).</text>
</comment>
<comment type="catalytic activity">
    <reaction evidence="1">
        <text>3-methyl-2-oxobutanoate + acetyl-CoA + H2O = (2S)-2-isopropylmalate + CoA + H(+)</text>
        <dbReference type="Rhea" id="RHEA:21524"/>
        <dbReference type="ChEBI" id="CHEBI:1178"/>
        <dbReference type="ChEBI" id="CHEBI:11851"/>
        <dbReference type="ChEBI" id="CHEBI:15377"/>
        <dbReference type="ChEBI" id="CHEBI:15378"/>
        <dbReference type="ChEBI" id="CHEBI:57287"/>
        <dbReference type="ChEBI" id="CHEBI:57288"/>
        <dbReference type="EC" id="2.3.3.13"/>
    </reaction>
</comment>
<comment type="cofactor">
    <cofactor evidence="1">
        <name>Mn(2+)</name>
        <dbReference type="ChEBI" id="CHEBI:29035"/>
    </cofactor>
</comment>
<comment type="pathway">
    <text evidence="1">Amino-acid biosynthesis; L-leucine biosynthesis; L-leucine from 3-methyl-2-oxobutanoate: step 1/4.</text>
</comment>
<comment type="subunit">
    <text evidence="1">Homodimer.</text>
</comment>
<comment type="subcellular location">
    <subcellularLocation>
        <location evidence="1">Cytoplasm</location>
    </subcellularLocation>
</comment>
<comment type="similarity">
    <text evidence="1">Belongs to the alpha-IPM synthase/homocitrate synthase family. LeuA type 1 subfamily.</text>
</comment>
<reference key="1">
    <citation type="journal article" date="2007" name="PLoS Genet.">
        <title>Patterns and implications of gene gain and loss in the evolution of Prochlorococcus.</title>
        <authorList>
            <person name="Kettler G.C."/>
            <person name="Martiny A.C."/>
            <person name="Huang K."/>
            <person name="Zucker J."/>
            <person name="Coleman M.L."/>
            <person name="Rodrigue S."/>
            <person name="Chen F."/>
            <person name="Lapidus A."/>
            <person name="Ferriera S."/>
            <person name="Johnson J."/>
            <person name="Steglich C."/>
            <person name="Church G.M."/>
            <person name="Richardson P."/>
            <person name="Chisholm S.W."/>
        </authorList>
    </citation>
    <scope>NUCLEOTIDE SEQUENCE [LARGE SCALE GENOMIC DNA]</scope>
    <source>
        <strain>MIT 9301</strain>
    </source>
</reference>
<keyword id="KW-0028">Amino-acid biosynthesis</keyword>
<keyword id="KW-0100">Branched-chain amino acid biosynthesis</keyword>
<keyword id="KW-0963">Cytoplasm</keyword>
<keyword id="KW-0432">Leucine biosynthesis</keyword>
<keyword id="KW-0464">Manganese</keyword>
<keyword id="KW-0479">Metal-binding</keyword>
<keyword id="KW-1185">Reference proteome</keyword>
<keyword id="KW-0808">Transferase</keyword>
<protein>
    <recommendedName>
        <fullName evidence="1">2-isopropylmalate synthase</fullName>
        <ecNumber evidence="1">2.3.3.13</ecNumber>
    </recommendedName>
    <alternativeName>
        <fullName evidence="1">Alpha-IPM synthase</fullName>
    </alternativeName>
    <alternativeName>
        <fullName evidence="1">Alpha-isopropylmalate synthase</fullName>
    </alternativeName>
</protein>
<name>LEU1_PROM0</name>
<evidence type="ECO:0000255" key="1">
    <source>
        <dbReference type="HAMAP-Rule" id="MF_01025"/>
    </source>
</evidence>
<organism>
    <name type="scientific">Prochlorococcus marinus (strain MIT 9301)</name>
    <dbReference type="NCBI Taxonomy" id="167546"/>
    <lineage>
        <taxon>Bacteria</taxon>
        <taxon>Bacillati</taxon>
        <taxon>Cyanobacteriota</taxon>
        <taxon>Cyanophyceae</taxon>
        <taxon>Synechococcales</taxon>
        <taxon>Prochlorococcaceae</taxon>
        <taxon>Prochlorococcus</taxon>
    </lineage>
</organism>
<gene>
    <name evidence="1" type="primary">leuA</name>
    <name type="ordered locus">P9301_11721</name>
</gene>
<accession>A3PDH0</accession>